<accession>E9PYL2</accession>
<accession>Q69ZN8</accession>
<reference key="1">
    <citation type="journal article" date="2009" name="PLoS Biol.">
        <title>Lineage-specific biology revealed by a finished genome assembly of the mouse.</title>
        <authorList>
            <person name="Church D.M."/>
            <person name="Goodstadt L."/>
            <person name="Hillier L.W."/>
            <person name="Zody M.C."/>
            <person name="Goldstein S."/>
            <person name="She X."/>
            <person name="Bult C.J."/>
            <person name="Agarwala R."/>
            <person name="Cherry J.L."/>
            <person name="DiCuccio M."/>
            <person name="Hlavina W."/>
            <person name="Kapustin Y."/>
            <person name="Meric P."/>
            <person name="Maglott D."/>
            <person name="Birtle Z."/>
            <person name="Marques A.C."/>
            <person name="Graves T."/>
            <person name="Zhou S."/>
            <person name="Teague B."/>
            <person name="Potamousis K."/>
            <person name="Churas C."/>
            <person name="Place M."/>
            <person name="Herschleb J."/>
            <person name="Runnheim R."/>
            <person name="Forrest D."/>
            <person name="Amos-Landgraf J."/>
            <person name="Schwartz D.C."/>
            <person name="Cheng Z."/>
            <person name="Lindblad-Toh K."/>
            <person name="Eichler E.E."/>
            <person name="Ponting C.P."/>
        </authorList>
    </citation>
    <scope>NUCLEOTIDE SEQUENCE [LARGE SCALE GENOMIC DNA]</scope>
    <source>
        <strain>C57BL/6J</strain>
    </source>
</reference>
<reference key="2">
    <citation type="journal article" date="2004" name="DNA Res.">
        <title>Prediction of the coding sequences of mouse homologues of KIAA gene: IV. The complete nucleotide sequences of 500 mouse KIAA-homologous cDNAs identified by screening of terminal sequences of cDNA clones randomly sampled from size-fractionated libraries.</title>
        <authorList>
            <person name="Okazaki N."/>
            <person name="Kikuno R."/>
            <person name="Ohara R."/>
            <person name="Inamoto S."/>
            <person name="Koseki H."/>
            <person name="Hiraoka S."/>
            <person name="Saga Y."/>
            <person name="Seino S."/>
            <person name="Nishimura M."/>
            <person name="Kaisho T."/>
            <person name="Hoshino K."/>
            <person name="Kitamura H."/>
            <person name="Nagase T."/>
            <person name="Ohara O."/>
            <person name="Koga H."/>
        </authorList>
    </citation>
    <scope>NUCLEOTIDE SEQUENCE OF 188-2035</scope>
    <source>
        <tissue evidence="4">Embryonic tail</tissue>
    </source>
</reference>
<reference key="3">
    <citation type="journal article" date="2007" name="Proc. Natl. Acad. Sci. U.S.A.">
        <title>Large-scale phosphorylation analysis of mouse liver.</title>
        <authorList>
            <person name="Villen J."/>
            <person name="Beausoleil S.A."/>
            <person name="Gerber S.A."/>
            <person name="Gygi S.P."/>
        </authorList>
    </citation>
    <scope>PHOSPHORYLATION [LARGE SCALE ANALYSIS] AT THR-1555 AND SER-1562</scope>
    <scope>IDENTIFICATION BY MASS SPECTROMETRY [LARGE SCALE ANALYSIS]</scope>
    <source>
        <tissue>Liver</tissue>
    </source>
</reference>
<reference key="4">
    <citation type="journal article" date="2009" name="Immunity">
        <title>The phagosomal proteome in interferon-gamma-activated macrophages.</title>
        <authorList>
            <person name="Trost M."/>
            <person name="English L."/>
            <person name="Lemieux S."/>
            <person name="Courcelles M."/>
            <person name="Desjardins M."/>
            <person name="Thibault P."/>
        </authorList>
    </citation>
    <scope>PHOSPHORYLATION [LARGE SCALE ANALYSIS] AT SER-648</scope>
    <scope>IDENTIFICATION BY MASS SPECTROMETRY [LARGE SCALE ANALYSIS]</scope>
</reference>
<reference key="5">
    <citation type="journal article" date="2010" name="Cell">
        <title>A tissue-specific atlas of mouse protein phosphorylation and expression.</title>
        <authorList>
            <person name="Huttlin E.L."/>
            <person name="Jedrychowski M.P."/>
            <person name="Elias J.E."/>
            <person name="Goswami T."/>
            <person name="Rad R."/>
            <person name="Beausoleil S.A."/>
            <person name="Villen J."/>
            <person name="Haas W."/>
            <person name="Sowa M.E."/>
            <person name="Gygi S.P."/>
        </authorList>
    </citation>
    <scope>PHOSPHORYLATION [LARGE SCALE ANALYSIS] AT SER-330; SER-338; SER-648; SER-859; SER-1128; SER-1372; SER-1373; THR-1555 AND SER-1562</scope>
    <scope>IDENTIFICATION BY MASS SPECTROMETRY [LARGE SCALE ANALYSIS]</scope>
    <source>
        <tissue>Brain</tissue>
        <tissue>Brown adipose tissue</tissue>
        <tissue>Heart</tissue>
        <tissue>Kidney</tissue>
        <tissue>Liver</tissue>
        <tissue>Lung</tissue>
        <tissue>Pancreas</tissue>
        <tissue>Spleen</tissue>
        <tissue>Testis</tissue>
    </source>
</reference>
<reference key="6">
    <citation type="journal article" date="2015" name="Neurogenetics">
        <title>A de novo t(10;19)(q22.3;q13.33) leads to ZMIZ1/PRR12 reciprocal fusion transcripts in a girl with intellectual disability and neuropsychiatric alterations.</title>
        <authorList>
            <person name="Cordova-Fletes C."/>
            <person name="Dominguez M.G."/>
            <person name="Delint-Ramirez I."/>
            <person name="Martinez-Rodriguez H.G."/>
            <person name="Rivas-Estilla A.M."/>
            <person name="Barros-Nunez P."/>
            <person name="Ortiz-Lopez R."/>
            <person name="Neira V.A."/>
        </authorList>
    </citation>
    <scope>TISSUE SPECIFICITY</scope>
    <scope>DEVELOPMENTAL STAGE</scope>
    <scope>SUBCELLULAR LOCATION</scope>
</reference>
<sequence>MDRNYPSAGFGDPLGAGAGWSYERSAKASLVYGSSRTSHPETDILHRQAYAAPHPLQSYATNHHPAGLSGLFDTGLHHAGSAGPDASVMNLISALESRGPQPGPSASSLLSQFRSPSWQTAMHTPGPTELFISGALPGSSTFPSSSALSAYQHPASFGSRPFPVPSSLSLQDPPFSPPANGLLSPHDVLHLKPSQAPTVPSSLGFERLAGGGVLGPAGLGPAQTPPYRPGPPDPPPPPRHLPTQFNLLASSSAATAAEPSSPQLYNFSGAAPGPPPERALPRQDTVIKHYQRPASAQPPPPPPPAHSLQHYLSCGGSYPSMGHRASLACSPLGGGEPSPGAGEPSKGGPSGATAGAAGRATGPETAGGGAAGGGGGYRPIIQSPGYKTSKGGYGPATGGATRPPPPRSTATPKCQSLGGPAAAYAAGKASGAGGAGSQAYSPGQPQGLLGPQAYGQGFGGGQAQDLSKGPSYSGGPPQPPSGPPPPGLATCQSYSPDQLQGQLYGVQSEPYPGPAAHSQGLPTASPSLSYSTGHSPALSGHGGGWGPSSLGGGGEASPSHIIRPLQSPPATGRPPGVGSPGAPGKYLSSVLASAPFLAPPGASSYAAGAGGYKGKGDGSELLAGPGGSAAERTEDEEFLIQHLLQAPSPPRTSGADGLVGEDGPADAAKGLGGSGGAGGAPGTPYELAKEDPQRYHLQSVIRTSASLDEGATAALELGLGRMKDKKKGPERGGETPEGLATSVVHYGAGAKELGAFLQKSPPPPPPSAQATQPAPHGLLLEAGGPDLPMVLPPPPPQLLPSVLSHAPSPSPSAPKVGVHLLEPATRDGAPQPPPPPPPPMPLQLEAHLRGHGLEPTAPSPRLRPEESLEPPGAMQELLGALEPLPSGPGDPGVGPPNSEGKDPAGAYRSPSPQGTKAPRFVPLTSICFPDSLLQDEERSFFPTMEEMFGGGAADDYGKAGQTEDDGDPKTGAGPPPGPTAYDPYGPYCGGRASGTGPETPGLGLDHNKPPELPSTVNAEPLGLIQSGPHQSAPPPPPPPPPPPPVSEPKGGLTSPIFCSTKPKKLLKTSSFHLLRRRDPPFQTPKKLYAQEYEFEADEDKADVPADIRLNPRRLPDLVSSCRSRPALSPLGDIDFCPPNPGPDGPRRRGRKPTKAKRDGPPRPRGRPRIRPLEGPAMAGPASITTDGAKKPRGRGRGRGRKAEEMGGTRLEPLKPLKIKLSVPKAGEGLGAPSNDVISGVDHNSLDSNLTREKIEAKIKEVEEKQPEMKSGFMASFLDFLKSGKRHPPLYQAGLTPPLSPPKSVPASVPTRGLQPPPPTVPTVPHPAPSGPFGLGGALEAAESEGLGLGCPSPCKRLDEELKRNLETLPSFSSDEEDSVAKNRDLQESISSAISALDDPPLTGPKDTSTPEEPPLDTGPTASGPPPLPSLPSSNSSGTPEPPLLEEKPPPTPPPAPTPQPAPPPPPPPPPVPALPSPTPLVTPVASSPPPPPPPPPPPPALPSPPPPPPPAPTTVPPVAPPEEPPAPSPEDPEPPDARPLHLAKKQETAAVCGETDEEAGESGGEGIFRERDEFVIRAEDIPSLKLALQTGREPPPIWRVQKALLQKFTPEIKDGQRQFCATSNYLGYFGDAKNRYQRLYVKFLENVNKKDYVRVCARKPWHRPPLPVRRSGQTKGPTPVGGNSAPPSKVQAPPPKPETPEKMTSEKPPEPAPEPAVPEPPAPEKPSPPRPVEKEKEKEKEKEKEKERVTRPLRSERATSGRQMRTDRSLATGQSTTSRLPKARPSKVKAEPPPKKRKKWLKEAVGNASAGDGPGGSSSDSESSPGAPSEDERAVPGRLLKTRAMREMYRSYVEMLVSTALDPDMIQALEDTHDELYLPPMRKIDGLLNEHKKKVLKRLSLSPALQDALHTFPQLQVEQTGEGSPEEGAVRLRPAGEPYNRKTLSKLKRSVVRAQEFKVELEKSGYYTLYHSLHHYKYHTFLRCRDQTLAIEGGAEDLGQEEVVQQCMRNQPWLEQLFDSFSDLLAQAQAHSRCG</sequence>
<proteinExistence type="evidence at protein level"/>
<name>PRR12_MOUSE</name>
<dbReference type="EMBL" id="AC126256">
    <property type="status" value="NOT_ANNOTATED_CDS"/>
    <property type="molecule type" value="Genomic_DNA"/>
</dbReference>
<dbReference type="EMBL" id="AK173130">
    <property type="protein sequence ID" value="BAD32408.1"/>
    <property type="molecule type" value="mRNA"/>
</dbReference>
<dbReference type="CCDS" id="CCDS52241.1"/>
<dbReference type="RefSeq" id="NP_778187.2">
    <property type="nucleotide sequence ID" value="NM_175022.2"/>
</dbReference>
<dbReference type="FunCoup" id="E9PYL2">
    <property type="interactions" value="195"/>
</dbReference>
<dbReference type="IntAct" id="E9PYL2">
    <property type="interactions" value="1"/>
</dbReference>
<dbReference type="MINT" id="E9PYL2"/>
<dbReference type="STRING" id="10090.ENSMUSP00000054702"/>
<dbReference type="GlyGen" id="E9PYL2">
    <property type="glycosylation" value="9 sites, 1 O-linked glycan (2 sites)"/>
</dbReference>
<dbReference type="iPTMnet" id="E9PYL2"/>
<dbReference type="PhosphoSitePlus" id="E9PYL2"/>
<dbReference type="jPOST" id="E9PYL2"/>
<dbReference type="PaxDb" id="10090-ENSMUSP00000054702"/>
<dbReference type="PeptideAtlas" id="E9PYL2"/>
<dbReference type="ProteomicsDB" id="291798"/>
<dbReference type="Pumba" id="E9PYL2"/>
<dbReference type="Antibodypedia" id="32065">
    <property type="antibodies" value="12 antibodies from 9 providers"/>
</dbReference>
<dbReference type="Ensembl" id="ENSMUST00000057293.8">
    <property type="protein sequence ID" value="ENSMUSP00000054702.7"/>
    <property type="gene ID" value="ENSMUSG00000046574.9"/>
</dbReference>
<dbReference type="GeneID" id="233210"/>
<dbReference type="KEGG" id="mmu:233210"/>
<dbReference type="UCSC" id="uc009gsu.1">
    <property type="organism name" value="mouse"/>
</dbReference>
<dbReference type="AGR" id="MGI:2679002"/>
<dbReference type="CTD" id="57479"/>
<dbReference type="MGI" id="MGI:2679002">
    <property type="gene designation" value="Prr12"/>
</dbReference>
<dbReference type="VEuPathDB" id="HostDB:ENSMUSG00000046574"/>
<dbReference type="eggNOG" id="KOG4805">
    <property type="taxonomic scope" value="Eukaryota"/>
</dbReference>
<dbReference type="GeneTree" id="ENSGT00440000037417"/>
<dbReference type="HOGENOM" id="CLU_000708_0_0_1"/>
<dbReference type="InParanoid" id="E9PYL2"/>
<dbReference type="OMA" id="FPEMEDM"/>
<dbReference type="OrthoDB" id="21499at2759"/>
<dbReference type="TreeFam" id="TF333141"/>
<dbReference type="BioGRID-ORCS" id="233210">
    <property type="hits" value="7 hits in 78 CRISPR screens"/>
</dbReference>
<dbReference type="ChiTaRS" id="Prr12">
    <property type="organism name" value="mouse"/>
</dbReference>
<dbReference type="PRO" id="PR:E9PYL2"/>
<dbReference type="Proteomes" id="UP000000589">
    <property type="component" value="Chromosome 7"/>
</dbReference>
<dbReference type="RNAct" id="E9PYL2">
    <property type="molecule type" value="protein"/>
</dbReference>
<dbReference type="Bgee" id="ENSMUSG00000046574">
    <property type="expression patterns" value="Expressed in dorsal pancreas and 228 other cell types or tissues"/>
</dbReference>
<dbReference type="GO" id="GO:0043005">
    <property type="term" value="C:neuron projection"/>
    <property type="evidence" value="ECO:0007669"/>
    <property type="project" value="UniProtKB-KW"/>
</dbReference>
<dbReference type="GO" id="GO:0005634">
    <property type="term" value="C:nucleus"/>
    <property type="evidence" value="ECO:0007669"/>
    <property type="project" value="UniProtKB-SubCell"/>
</dbReference>
<dbReference type="GO" id="GO:0014069">
    <property type="term" value="C:postsynaptic density"/>
    <property type="evidence" value="ECO:0007669"/>
    <property type="project" value="UniProtKB-SubCell"/>
</dbReference>
<dbReference type="GO" id="GO:0003677">
    <property type="term" value="F:DNA binding"/>
    <property type="evidence" value="ECO:0007669"/>
    <property type="project" value="UniProtKB-KW"/>
</dbReference>
<dbReference type="InterPro" id="IPR052466">
    <property type="entry name" value="DNA_MethProtect_Complex"/>
</dbReference>
<dbReference type="InterPro" id="IPR025451">
    <property type="entry name" value="DUF4211"/>
</dbReference>
<dbReference type="PANTHER" id="PTHR14709">
    <property type="entry name" value="GLUTAMINE AND SERINE-RICH PROTEIN 1-RELATED"/>
    <property type="match status" value="1"/>
</dbReference>
<dbReference type="PANTHER" id="PTHR14709:SF1">
    <property type="entry name" value="PROLINE-RICH PROTEIN 12"/>
    <property type="match status" value="1"/>
</dbReference>
<dbReference type="Pfam" id="PF13926">
    <property type="entry name" value="DUF4211"/>
    <property type="match status" value="1"/>
</dbReference>
<organism>
    <name type="scientific">Mus musculus</name>
    <name type="common">Mouse</name>
    <dbReference type="NCBI Taxonomy" id="10090"/>
    <lineage>
        <taxon>Eukaryota</taxon>
        <taxon>Metazoa</taxon>
        <taxon>Chordata</taxon>
        <taxon>Craniata</taxon>
        <taxon>Vertebrata</taxon>
        <taxon>Euteleostomi</taxon>
        <taxon>Mammalia</taxon>
        <taxon>Eutheria</taxon>
        <taxon>Euarchontoglires</taxon>
        <taxon>Glires</taxon>
        <taxon>Rodentia</taxon>
        <taxon>Myomorpha</taxon>
        <taxon>Muroidea</taxon>
        <taxon>Muridae</taxon>
        <taxon>Murinae</taxon>
        <taxon>Mus</taxon>
        <taxon>Mus</taxon>
    </lineage>
</organism>
<keyword id="KW-0007">Acetylation</keyword>
<keyword id="KW-0238">DNA-binding</keyword>
<keyword id="KW-0539">Nucleus</keyword>
<keyword id="KW-0597">Phosphoprotein</keyword>
<keyword id="KW-1185">Reference proteome</keyword>
<keyword id="KW-0770">Synapse</keyword>
<keyword id="KW-0771">Synaptosome</keyword>
<protein>
    <recommendedName>
        <fullName>Proline-rich protein 12</fullName>
    </recommendedName>
</protein>
<comment type="subcellular location">
    <subcellularLocation>
        <location evidence="3">Nucleus</location>
    </subcellularLocation>
    <subcellularLocation>
        <location evidence="3">Postsynaptic density</location>
    </subcellularLocation>
    <subcellularLocation>
        <location evidence="3">Synapse</location>
        <location evidence="3">Synaptosome</location>
    </subcellularLocation>
    <text evidence="3">A smaller form of approximately 150 kDa has been found in perisynapse, synaptosomes and postsynaptic density in 15 dpc, P1 and adult brains.</text>
</comment>
<comment type="tissue specificity">
    <text evidence="3">Expressed in brain.</text>
</comment>
<comment type="developmental stage">
    <text evidence="3">Strongest expression found in embryonic day 15 dpc compared to postnatal day P1 and adult brain.</text>
</comment>
<gene>
    <name evidence="5" type="primary">Prr12</name>
    <name type="synonym">Kiaa1205</name>
</gene>
<evidence type="ECO:0000250" key="1">
    <source>
        <dbReference type="UniProtKB" id="Q9ULL5"/>
    </source>
</evidence>
<evidence type="ECO:0000256" key="2">
    <source>
        <dbReference type="SAM" id="MobiDB-lite"/>
    </source>
</evidence>
<evidence type="ECO:0000269" key="3">
    <source>
    </source>
</evidence>
<evidence type="ECO:0000312" key="4">
    <source>
        <dbReference type="EMBL" id="BAD32408.1"/>
    </source>
</evidence>
<evidence type="ECO:0000312" key="5">
    <source>
        <dbReference type="MGI" id="MGI:2679002"/>
    </source>
</evidence>
<evidence type="ECO:0007744" key="6">
    <source>
    </source>
</evidence>
<evidence type="ECO:0007744" key="7">
    <source>
    </source>
</evidence>
<evidence type="ECO:0007744" key="8">
    <source>
    </source>
</evidence>
<feature type="chain" id="PRO_0000435433" description="Proline-rich protein 12">
    <location>
        <begin position="1"/>
        <end position="2035"/>
    </location>
</feature>
<feature type="region of interest" description="Disordered" evidence="2">
    <location>
        <begin position="210"/>
        <end position="280"/>
    </location>
</feature>
<feature type="region of interest" description="Disordered" evidence="2">
    <location>
        <begin position="292"/>
        <end position="311"/>
    </location>
</feature>
<feature type="region of interest" description="Disordered" evidence="2">
    <location>
        <begin position="329"/>
        <end position="584"/>
    </location>
</feature>
<feature type="region of interest" description="Disordered" evidence="2">
    <location>
        <begin position="645"/>
        <end position="685"/>
    </location>
</feature>
<feature type="region of interest" description="Disordered" evidence="2">
    <location>
        <begin position="755"/>
        <end position="844"/>
    </location>
</feature>
<feature type="region of interest" description="Disordered" evidence="2">
    <location>
        <begin position="851"/>
        <end position="870"/>
    </location>
</feature>
<feature type="region of interest" description="Disordered" evidence="2">
    <location>
        <begin position="879"/>
        <end position="920"/>
    </location>
</feature>
<feature type="region of interest" description="Disordered" evidence="2">
    <location>
        <begin position="946"/>
        <end position="1061"/>
    </location>
</feature>
<feature type="region of interest" description="Disordered" evidence="2">
    <location>
        <begin position="1112"/>
        <end position="1244"/>
    </location>
</feature>
<feature type="region of interest" description="Disordered" evidence="2">
    <location>
        <begin position="1288"/>
        <end position="1355"/>
    </location>
</feature>
<feature type="region of interest" description="Disordered" evidence="2">
    <location>
        <begin position="1367"/>
        <end position="1567"/>
    </location>
</feature>
<feature type="region of interest" description="Disordered" evidence="2">
    <location>
        <begin position="1662"/>
        <end position="1839"/>
    </location>
</feature>
<feature type="compositionally biased region" description="Pro residues" evidence="2">
    <location>
        <begin position="223"/>
        <end position="240"/>
    </location>
</feature>
<feature type="compositionally biased region" description="Low complexity" evidence="2">
    <location>
        <begin position="249"/>
        <end position="261"/>
    </location>
</feature>
<feature type="compositionally biased region" description="Pro residues" evidence="2">
    <location>
        <begin position="296"/>
        <end position="305"/>
    </location>
</feature>
<feature type="compositionally biased region" description="Low complexity" evidence="2">
    <location>
        <begin position="338"/>
        <end position="364"/>
    </location>
</feature>
<feature type="compositionally biased region" description="Gly residues" evidence="2">
    <location>
        <begin position="365"/>
        <end position="377"/>
    </location>
</feature>
<feature type="compositionally biased region" description="Low complexity" evidence="2">
    <location>
        <begin position="408"/>
        <end position="429"/>
    </location>
</feature>
<feature type="compositionally biased region" description="Low complexity" evidence="2">
    <location>
        <begin position="437"/>
        <end position="455"/>
    </location>
</feature>
<feature type="compositionally biased region" description="Pro residues" evidence="2">
    <location>
        <begin position="476"/>
        <end position="487"/>
    </location>
</feature>
<feature type="compositionally biased region" description="Polar residues" evidence="2">
    <location>
        <begin position="490"/>
        <end position="501"/>
    </location>
</feature>
<feature type="compositionally biased region" description="Polar residues" evidence="2">
    <location>
        <begin position="520"/>
        <end position="534"/>
    </location>
</feature>
<feature type="compositionally biased region" description="Gly residues" evidence="2">
    <location>
        <begin position="540"/>
        <end position="555"/>
    </location>
</feature>
<feature type="compositionally biased region" description="Gly residues" evidence="2">
    <location>
        <begin position="670"/>
        <end position="681"/>
    </location>
</feature>
<feature type="compositionally biased region" description="Pro residues" evidence="2">
    <location>
        <begin position="830"/>
        <end position="841"/>
    </location>
</feature>
<feature type="compositionally biased region" description="Pro residues" evidence="2">
    <location>
        <begin position="1031"/>
        <end position="1046"/>
    </location>
</feature>
<feature type="compositionally biased region" description="Basic residues" evidence="2">
    <location>
        <begin position="1190"/>
        <end position="1199"/>
    </location>
</feature>
<feature type="compositionally biased region" description="Basic and acidic residues" evidence="2">
    <location>
        <begin position="1200"/>
        <end position="1214"/>
    </location>
</feature>
<feature type="compositionally biased region" description="Pro residues" evidence="2">
    <location>
        <begin position="1314"/>
        <end position="1329"/>
    </location>
</feature>
<feature type="compositionally biased region" description="Pro residues" evidence="2">
    <location>
        <begin position="1449"/>
        <end position="1529"/>
    </location>
</feature>
<feature type="compositionally biased region" description="Basic and acidic residues" evidence="2">
    <location>
        <begin position="1535"/>
        <end position="1547"/>
    </location>
</feature>
<feature type="compositionally biased region" description="Basic and acidic residues" evidence="2">
    <location>
        <begin position="1698"/>
        <end position="1709"/>
    </location>
</feature>
<feature type="compositionally biased region" description="Pro residues" evidence="2">
    <location>
        <begin position="1710"/>
        <end position="1730"/>
    </location>
</feature>
<feature type="compositionally biased region" description="Basic and acidic residues" evidence="2">
    <location>
        <begin position="1731"/>
        <end position="1768"/>
    </location>
</feature>
<feature type="compositionally biased region" description="Polar residues" evidence="2">
    <location>
        <begin position="1769"/>
        <end position="1779"/>
    </location>
</feature>
<feature type="compositionally biased region" description="Low complexity" evidence="2">
    <location>
        <begin position="1817"/>
        <end position="1828"/>
    </location>
</feature>
<feature type="modified residue" description="Phosphoserine" evidence="8">
    <location>
        <position position="330"/>
    </location>
</feature>
<feature type="modified residue" description="Phosphoserine" evidence="8">
    <location>
        <position position="338"/>
    </location>
</feature>
<feature type="modified residue" description="Phosphoserine" evidence="7 8">
    <location>
        <position position="648"/>
    </location>
</feature>
<feature type="modified residue" description="Phosphothreonine" evidence="1">
    <location>
        <position position="735"/>
    </location>
</feature>
<feature type="modified residue" description="Phosphoserine" evidence="8">
    <location>
        <position position="859"/>
    </location>
</feature>
<feature type="modified residue" description="Phosphoserine" evidence="1">
    <location>
        <position position="1070"/>
    </location>
</feature>
<feature type="modified residue" description="Phosphoserine" evidence="8">
    <location>
        <position position="1128"/>
    </location>
</feature>
<feature type="modified residue" description="N6-acetyllysine" evidence="1">
    <location>
        <position position="1214"/>
    </location>
</feature>
<feature type="modified residue" description="Phosphothreonine" evidence="1">
    <location>
        <position position="1295"/>
    </location>
</feature>
<feature type="modified residue" description="Phosphoserine" evidence="1">
    <location>
        <position position="1299"/>
    </location>
</feature>
<feature type="modified residue" description="Phosphoserine" evidence="8">
    <location>
        <position position="1372"/>
    </location>
</feature>
<feature type="modified residue" description="Phosphoserine" evidence="8">
    <location>
        <position position="1373"/>
    </location>
</feature>
<feature type="modified residue" description="Phosphoserine" evidence="1">
    <location>
        <position position="1378"/>
    </location>
</feature>
<feature type="modified residue" description="Phosphothreonine" evidence="6 8">
    <location>
        <position position="1555"/>
    </location>
</feature>
<feature type="modified residue" description="Phosphoserine" evidence="6 8">
    <location>
        <position position="1562"/>
    </location>
</feature>
<feature type="modified residue" description="Phosphothreonine" evidence="1">
    <location>
        <position position="1699"/>
    </location>
</feature>
<feature type="modified residue" description="Phosphoserine" evidence="1">
    <location>
        <position position="1924"/>
    </location>
</feature>